<gene>
    <name type="ordered locus">XCC2748</name>
</gene>
<accession>Q8P765</accession>
<protein>
    <recommendedName>
        <fullName evidence="1">UPF0301 protein XCC2748</fullName>
    </recommendedName>
</protein>
<reference key="1">
    <citation type="journal article" date="2002" name="Nature">
        <title>Comparison of the genomes of two Xanthomonas pathogens with differing host specificities.</title>
        <authorList>
            <person name="da Silva A.C.R."/>
            <person name="Ferro J.A."/>
            <person name="Reinach F.C."/>
            <person name="Farah C.S."/>
            <person name="Furlan L.R."/>
            <person name="Quaggio R.B."/>
            <person name="Monteiro-Vitorello C.B."/>
            <person name="Van Sluys M.A."/>
            <person name="Almeida N.F. Jr."/>
            <person name="Alves L.M.C."/>
            <person name="do Amaral A.M."/>
            <person name="Bertolini M.C."/>
            <person name="Camargo L.E.A."/>
            <person name="Camarotte G."/>
            <person name="Cannavan F."/>
            <person name="Cardozo J."/>
            <person name="Chambergo F."/>
            <person name="Ciapina L.P."/>
            <person name="Cicarelli R.M.B."/>
            <person name="Coutinho L.L."/>
            <person name="Cursino-Santos J.R."/>
            <person name="El-Dorry H."/>
            <person name="Faria J.B."/>
            <person name="Ferreira A.J.S."/>
            <person name="Ferreira R.C.C."/>
            <person name="Ferro M.I.T."/>
            <person name="Formighieri E.F."/>
            <person name="Franco M.C."/>
            <person name="Greggio C.C."/>
            <person name="Gruber A."/>
            <person name="Katsuyama A.M."/>
            <person name="Kishi L.T."/>
            <person name="Leite R.P."/>
            <person name="Lemos E.G.M."/>
            <person name="Lemos M.V.F."/>
            <person name="Locali E.C."/>
            <person name="Machado M.A."/>
            <person name="Madeira A.M.B.N."/>
            <person name="Martinez-Rossi N.M."/>
            <person name="Martins E.C."/>
            <person name="Meidanis J."/>
            <person name="Menck C.F.M."/>
            <person name="Miyaki C.Y."/>
            <person name="Moon D.H."/>
            <person name="Moreira L.M."/>
            <person name="Novo M.T.M."/>
            <person name="Okura V.K."/>
            <person name="Oliveira M.C."/>
            <person name="Oliveira V.R."/>
            <person name="Pereira H.A."/>
            <person name="Rossi A."/>
            <person name="Sena J.A.D."/>
            <person name="Silva C."/>
            <person name="de Souza R.F."/>
            <person name="Spinola L.A.F."/>
            <person name="Takita M.A."/>
            <person name="Tamura R.E."/>
            <person name="Teixeira E.C."/>
            <person name="Tezza R.I.D."/>
            <person name="Trindade dos Santos M."/>
            <person name="Truffi D."/>
            <person name="Tsai S.M."/>
            <person name="White F.F."/>
            <person name="Setubal J.C."/>
            <person name="Kitajima J.P."/>
        </authorList>
    </citation>
    <scope>NUCLEOTIDE SEQUENCE [LARGE SCALE GENOMIC DNA]</scope>
    <source>
        <strain>ATCC 33913 / DSM 3586 / NCPPB 528 / LMG 568 / P 25</strain>
    </source>
</reference>
<comment type="similarity">
    <text evidence="1">Belongs to the UPF0301 (AlgH) family.</text>
</comment>
<sequence length="188" mass="20118">MSVLPTPLANQLLIALPALSDPTFSRSVALICQHDENGAMGVLVNRPSEYTLGEVLSQMGIDTSDERLREQPVLSGGPVHPERGFVIHDDARAWDSSLEVGQGVYLTTSRDILEAMAAGDGPRNALVALGCAGWGAGQLEFELGENSWLTAPSDANVLFDTALEDRWQTAAGRIGVDLFRLTDYSGHA</sequence>
<feature type="chain" id="PRO_0000214356" description="UPF0301 protein XCC2748">
    <location>
        <begin position="1"/>
        <end position="188"/>
    </location>
</feature>
<name>Y2748_XANCP</name>
<proteinExistence type="inferred from homology"/>
<organism>
    <name type="scientific">Xanthomonas campestris pv. campestris (strain ATCC 33913 / DSM 3586 / NCPPB 528 / LMG 568 / P 25)</name>
    <dbReference type="NCBI Taxonomy" id="190485"/>
    <lineage>
        <taxon>Bacteria</taxon>
        <taxon>Pseudomonadati</taxon>
        <taxon>Pseudomonadota</taxon>
        <taxon>Gammaproteobacteria</taxon>
        <taxon>Lysobacterales</taxon>
        <taxon>Lysobacteraceae</taxon>
        <taxon>Xanthomonas</taxon>
    </lineage>
</organism>
<keyword id="KW-1185">Reference proteome</keyword>
<evidence type="ECO:0000255" key="1">
    <source>
        <dbReference type="HAMAP-Rule" id="MF_00758"/>
    </source>
</evidence>
<dbReference type="EMBL" id="AE008922">
    <property type="protein sequence ID" value="AAM42020.1"/>
    <property type="molecule type" value="Genomic_DNA"/>
</dbReference>
<dbReference type="RefSeq" id="NP_638096.1">
    <property type="nucleotide sequence ID" value="NC_003902.1"/>
</dbReference>
<dbReference type="RefSeq" id="WP_011037878.1">
    <property type="nucleotide sequence ID" value="NC_003902.1"/>
</dbReference>
<dbReference type="SMR" id="Q8P765"/>
<dbReference type="STRING" id="190485.XCC2748"/>
<dbReference type="EnsemblBacteria" id="AAM42020">
    <property type="protein sequence ID" value="AAM42020"/>
    <property type="gene ID" value="XCC2748"/>
</dbReference>
<dbReference type="KEGG" id="xcc:XCC2748"/>
<dbReference type="PATRIC" id="fig|190485.4.peg.2934"/>
<dbReference type="eggNOG" id="COG1678">
    <property type="taxonomic scope" value="Bacteria"/>
</dbReference>
<dbReference type="HOGENOM" id="CLU_057596_1_0_6"/>
<dbReference type="OrthoDB" id="9807486at2"/>
<dbReference type="Proteomes" id="UP000001010">
    <property type="component" value="Chromosome"/>
</dbReference>
<dbReference type="GO" id="GO:0005829">
    <property type="term" value="C:cytosol"/>
    <property type="evidence" value="ECO:0000318"/>
    <property type="project" value="GO_Central"/>
</dbReference>
<dbReference type="Gene3D" id="3.40.1740.10">
    <property type="entry name" value="VC0467-like"/>
    <property type="match status" value="1"/>
</dbReference>
<dbReference type="HAMAP" id="MF_00758">
    <property type="entry name" value="UPF0301"/>
    <property type="match status" value="1"/>
</dbReference>
<dbReference type="InterPro" id="IPR003774">
    <property type="entry name" value="AlgH-like"/>
</dbReference>
<dbReference type="NCBIfam" id="NF001266">
    <property type="entry name" value="PRK00228.1-1"/>
    <property type="match status" value="1"/>
</dbReference>
<dbReference type="PANTHER" id="PTHR30327">
    <property type="entry name" value="UNCHARACTERIZED PROTEIN YQGE"/>
    <property type="match status" value="1"/>
</dbReference>
<dbReference type="PANTHER" id="PTHR30327:SF1">
    <property type="entry name" value="UPF0301 PROTEIN YQGE"/>
    <property type="match status" value="1"/>
</dbReference>
<dbReference type="Pfam" id="PF02622">
    <property type="entry name" value="DUF179"/>
    <property type="match status" value="1"/>
</dbReference>
<dbReference type="SUPFAM" id="SSF143456">
    <property type="entry name" value="VC0467-like"/>
    <property type="match status" value="1"/>
</dbReference>